<accession>Q59020</accession>
<gene>
    <name evidence="1 2" type="primary">rqcH</name>
    <name type="ordered locus">MJ1625</name>
</gene>
<proteinExistence type="inferred from homology"/>
<reference key="1">
    <citation type="journal article" date="1996" name="Science">
        <title>Complete genome sequence of the methanogenic archaeon, Methanococcus jannaschii.</title>
        <authorList>
            <person name="Bult C.J."/>
            <person name="White O."/>
            <person name="Olsen G.J."/>
            <person name="Zhou L."/>
            <person name="Fleischmann R.D."/>
            <person name="Sutton G.G."/>
            <person name="Blake J.A."/>
            <person name="FitzGerald L.M."/>
            <person name="Clayton R.A."/>
            <person name="Gocayne J.D."/>
            <person name="Kerlavage A.R."/>
            <person name="Dougherty B.A."/>
            <person name="Tomb J.-F."/>
            <person name="Adams M.D."/>
            <person name="Reich C.I."/>
            <person name="Overbeek R."/>
            <person name="Kirkness E.F."/>
            <person name="Weinstock K.G."/>
            <person name="Merrick J.M."/>
            <person name="Glodek A."/>
            <person name="Scott J.L."/>
            <person name="Geoghagen N.S.M."/>
            <person name="Weidman J.F."/>
            <person name="Fuhrmann J.L."/>
            <person name="Nguyen D."/>
            <person name="Utterback T.R."/>
            <person name="Kelley J.M."/>
            <person name="Peterson J.D."/>
            <person name="Sadow P.W."/>
            <person name="Hanna M.C."/>
            <person name="Cotton M.D."/>
            <person name="Roberts K.M."/>
            <person name="Hurst M.A."/>
            <person name="Kaine B.P."/>
            <person name="Borodovsky M."/>
            <person name="Klenk H.-P."/>
            <person name="Fraser C.M."/>
            <person name="Smith H.O."/>
            <person name="Woese C.R."/>
            <person name="Venter J.C."/>
        </authorList>
    </citation>
    <scope>NUCLEOTIDE SEQUENCE [LARGE SCALE GENOMIC DNA]</scope>
    <source>
        <strain>ATCC 43067 / DSM 2661 / JAL-1 / JCM 10045 / NBRC 100440</strain>
    </source>
</reference>
<reference key="2">
    <citation type="journal article" date="2019" name="Cell">
        <title>Alanine Tails Signal Proteolysis in Bacterial Ribosome-Associated Quality Control.</title>
        <authorList>
            <person name="Lytvynenko I."/>
            <person name="Paternoga H."/>
            <person name="Thrun A."/>
            <person name="Balke A."/>
            <person name="Mueller T.A."/>
            <person name="Chiang C.H."/>
            <person name="Nagler K."/>
            <person name="Tsaprailis G."/>
            <person name="Anders S."/>
            <person name="Bischofs I."/>
            <person name="Maupin-Furlow J.A."/>
            <person name="Spahn C.M.T."/>
            <person name="Joazeiro C.A.P."/>
        </authorList>
    </citation>
    <scope>POSSIBLE FUNCTION</scope>
</reference>
<protein>
    <recommendedName>
        <fullName evidence="1 2">Archaeal Rqc2 homolog aRqcH</fullName>
        <shortName evidence="1 2">aRqcH</shortName>
    </recommendedName>
</protein>
<name>RQCH_METJA</name>
<sequence>MKSEITNVDVCCVVDELQNLINGRLDKAFLIDNEQNRELILKIHVPEGGSRELVISIGKYKYITLTNYEREKPKLPPSFAMLLRKYLKNAKLIKIEQVNFDRVVIFHFETRDGIYKLVAELFGDGNIIFLNNEDTIIAPLRVERWSTRNIVPKEKYKFPPQKPLNPYNLEFSIAYEVFKDYFLNNKGVECVRLISRVFGIGGLYAEEICERAEIDKKKRDLSEEEIKKLFEASKNLFDEIFNNRKPQIVLKDNEYFDVVPIDLKKYKGLEKKYYNSFLEAVDDYFAKFLTKVVVKKEKSKIEKEIERQENILRRQLETLKKYKEDAEKNQIKGDLIYANYQIVEELLNAIRQAREKMDWARIKKIIRENKEHPILGLIENINENIGEIIIRLKSEVDDKVIEERVSLDIRKNAFENAESYYEKAKKLRNKIEGIENAIELTKKKIEELKKKGEEELKEKESMQMKKKIRKERKWYEKFKWTVINGFLVIAGKDAITNEIIIKKYTDKDDIVFHADIQGAPFTVIKTQGKEVDEETLEEVAKFSVSHSRAWKLGYGAIDTYWVKPEQISKTAESGEYLKRGAFVIRGERHYYRNTPLELGVGVIEYDGDVKITTAPPKTLQKSFIKWVLLKPSNKEKGKVVKELKEIFKDYGIDDEDILRVLPPGGCEIVKK</sequence>
<dbReference type="EMBL" id="L77117">
    <property type="protein sequence ID" value="AAB99643.1"/>
    <property type="molecule type" value="Genomic_DNA"/>
</dbReference>
<dbReference type="PIR" id="H64502">
    <property type="entry name" value="H64502"/>
</dbReference>
<dbReference type="RefSeq" id="WP_010871150.1">
    <property type="nucleotide sequence ID" value="NC_000909.1"/>
</dbReference>
<dbReference type="SMR" id="Q59020"/>
<dbReference type="FunCoup" id="Q59020">
    <property type="interactions" value="142"/>
</dbReference>
<dbReference type="STRING" id="243232.MJ_1625"/>
<dbReference type="PaxDb" id="243232-MJ_1625"/>
<dbReference type="EnsemblBacteria" id="AAB99643">
    <property type="protein sequence ID" value="AAB99643"/>
    <property type="gene ID" value="MJ_1625"/>
</dbReference>
<dbReference type="GeneID" id="1452535"/>
<dbReference type="KEGG" id="mja:MJ_1625"/>
<dbReference type="eggNOG" id="arCOG01695">
    <property type="taxonomic scope" value="Archaea"/>
</dbReference>
<dbReference type="HOGENOM" id="CLU_003612_2_1_2"/>
<dbReference type="InParanoid" id="Q59020"/>
<dbReference type="OrthoDB" id="10943at2157"/>
<dbReference type="PhylomeDB" id="Q59020"/>
<dbReference type="Proteomes" id="UP000000805">
    <property type="component" value="Chromosome"/>
</dbReference>
<dbReference type="GO" id="GO:1990112">
    <property type="term" value="C:RQC complex"/>
    <property type="evidence" value="ECO:0000318"/>
    <property type="project" value="GO_Central"/>
</dbReference>
<dbReference type="GO" id="GO:0043023">
    <property type="term" value="F:ribosomal large subunit binding"/>
    <property type="evidence" value="ECO:0000318"/>
    <property type="project" value="GO_Central"/>
</dbReference>
<dbReference type="GO" id="GO:0019843">
    <property type="term" value="F:rRNA binding"/>
    <property type="evidence" value="ECO:0007669"/>
    <property type="project" value="UniProtKB-UniRule"/>
</dbReference>
<dbReference type="GO" id="GO:0000049">
    <property type="term" value="F:tRNA binding"/>
    <property type="evidence" value="ECO:0000318"/>
    <property type="project" value="GO_Central"/>
</dbReference>
<dbReference type="GO" id="GO:0072344">
    <property type="term" value="P:rescue of stalled ribosome"/>
    <property type="evidence" value="ECO:0000318"/>
    <property type="project" value="GO_Central"/>
</dbReference>
<dbReference type="FunFam" id="2.30.310.10:FF:000003">
    <property type="entry name" value="Zinc knuckle domain containing protein"/>
    <property type="match status" value="1"/>
</dbReference>
<dbReference type="Gene3D" id="1.10.8.50">
    <property type="match status" value="1"/>
</dbReference>
<dbReference type="Gene3D" id="2.30.310.10">
    <property type="entry name" value="ibrinogen binding protein from staphylococcus aureus domain"/>
    <property type="match status" value="1"/>
</dbReference>
<dbReference type="HAMAP" id="MF_00844_A">
    <property type="entry name" value="RqcH_A"/>
    <property type="match status" value="1"/>
</dbReference>
<dbReference type="InterPro" id="IPR008532">
    <property type="entry name" value="NFACT_RNA-bd"/>
</dbReference>
<dbReference type="InterPro" id="IPR010979">
    <property type="entry name" value="Ribosomal_uS13-like_H2TH"/>
</dbReference>
<dbReference type="InterPro" id="IPR051608">
    <property type="entry name" value="RQC_Subunit_NEMF"/>
</dbReference>
<dbReference type="InterPro" id="IPR043681">
    <property type="entry name" value="RqcH_archaeal"/>
</dbReference>
<dbReference type="NCBIfam" id="NF041120">
    <property type="entry name" value="RqcH_arch"/>
    <property type="match status" value="1"/>
</dbReference>
<dbReference type="PANTHER" id="PTHR15239">
    <property type="entry name" value="NUCLEAR EXPORT MEDIATOR FACTOR NEMF"/>
    <property type="match status" value="1"/>
</dbReference>
<dbReference type="PANTHER" id="PTHR15239:SF6">
    <property type="entry name" value="RIBOSOME QUALITY CONTROL COMPLEX SUBUNIT NEMF"/>
    <property type="match status" value="1"/>
</dbReference>
<dbReference type="Pfam" id="PF05670">
    <property type="entry name" value="NFACT-R_1"/>
    <property type="match status" value="1"/>
</dbReference>
<dbReference type="Pfam" id="PF05833">
    <property type="entry name" value="NFACT_N"/>
    <property type="match status" value="1"/>
</dbReference>
<dbReference type="SUPFAM" id="SSF46946">
    <property type="entry name" value="S13-like H2TH domain"/>
    <property type="match status" value="1"/>
</dbReference>
<evidence type="ECO:0000255" key="1">
    <source>
        <dbReference type="HAMAP-Rule" id="MF_00844"/>
    </source>
</evidence>
<evidence type="ECO:0000303" key="2">
    <source>
    </source>
</evidence>
<evidence type="ECO:0000305" key="3">
    <source>
    </source>
</evidence>
<organism>
    <name type="scientific">Methanocaldococcus jannaschii (strain ATCC 43067 / DSM 2661 / JAL-1 / JCM 10045 / NBRC 100440)</name>
    <name type="common">Methanococcus jannaschii</name>
    <dbReference type="NCBI Taxonomy" id="243232"/>
    <lineage>
        <taxon>Archaea</taxon>
        <taxon>Methanobacteriati</taxon>
        <taxon>Methanobacteriota</taxon>
        <taxon>Methanomada group</taxon>
        <taxon>Methanococci</taxon>
        <taxon>Methanococcales</taxon>
        <taxon>Methanocaldococcaceae</taxon>
        <taxon>Methanocaldococcus</taxon>
    </lineage>
</organism>
<comment type="function">
    <text evidence="1 3">Probably part of the ribosome quality control system (RQC). May mediate the addition of alanine residues (Ala tailing) to incompletely synthesized nascent chains from stalled ribosomes, leading to their degradation.</text>
</comment>
<comment type="subunit">
    <text evidence="1">Associates with stalled 50S ribosomal subunits.</text>
</comment>
<comment type="similarity">
    <text evidence="1">Belongs to the NEMF family.</text>
</comment>
<keyword id="KW-0175">Coiled coil</keyword>
<keyword id="KW-0648">Protein biosynthesis</keyword>
<keyword id="KW-1185">Reference proteome</keyword>
<keyword id="KW-0694">RNA-binding</keyword>
<keyword id="KW-0820">tRNA-binding</keyword>
<feature type="chain" id="PRO_0000107445" description="Archaeal Rqc2 homolog aRqcH">
    <location>
        <begin position="1"/>
        <end position="671"/>
    </location>
</feature>
<feature type="coiled-coil region" evidence="1">
    <location>
        <begin position="291"/>
        <end position="363"/>
    </location>
</feature>
<feature type="coiled-coil region" evidence="1">
    <location>
        <begin position="410"/>
        <end position="465"/>
    </location>
</feature>